<proteinExistence type="evidence at protein level"/>
<sequence>MTNLEDKLSASIKTENKDTIAPASTPAKPAARSAAPETTKPASTGAKPATRTAAKKPVARATTTKPAVSKSSKPSADDIQVPAHDTSTHPRRVWPD</sequence>
<reference evidence="5" key="1">
    <citation type="submission" date="2009-10" db="EMBL/GenBank/DDBJ databases">
        <title>Complete sequence of Halothiobacillus neapolitanus c2.</title>
        <authorList>
            <consortium name="US DOE Joint Genome Institute"/>
            <person name="Lucas S."/>
            <person name="Copeland A."/>
            <person name="Lapidus A."/>
            <person name="Glavina del Rio T."/>
            <person name="Tice H."/>
            <person name="Bruce D."/>
            <person name="Goodwin L."/>
            <person name="Pitluck S."/>
            <person name="Davenport K."/>
            <person name="Brettin T."/>
            <person name="Detter J.C."/>
            <person name="Han C."/>
            <person name="Tapia R."/>
            <person name="Larimer F."/>
            <person name="Land M."/>
            <person name="Hauser L."/>
            <person name="Kyrpides N."/>
            <person name="Mikhailova N."/>
            <person name="Kerfeld C."/>
            <person name="Cannon G."/>
            <person name="Heinhort S."/>
        </authorList>
    </citation>
    <scope>NUCLEOTIDE SEQUENCE [LARGE SCALE GENOMIC DNA]</scope>
    <source>
        <strain>ATCC 23641 / c2</strain>
    </source>
</reference>
<reference key="2">
    <citation type="journal article" date="2021" name="Mol. Microbiol.">
        <title>The McdAB system positions alpha-carboxysomes in proteobacteria.</title>
        <authorList>
            <person name="MacCready J.S."/>
            <person name="Tran L."/>
            <person name="Basalla J.L."/>
            <person name="Hakim P."/>
            <person name="Vecchiarelli A.G."/>
        </authorList>
    </citation>
    <scope>FUNCTION</scope>
    <scope>SUBUNIT</scope>
    <scope>INTERACTION WITH MCDA</scope>
    <scope>SUBCELLULAR LOCATION</scope>
    <scope>DISRUPTION PHENOTYPE</scope>
    <source>
        <strain>ATCC 23641 / c2</strain>
    </source>
</reference>
<evidence type="ECO:0000250" key="1">
    <source>
        <dbReference type="UniProtKB" id="Q8GJM6"/>
    </source>
</evidence>
<evidence type="ECO:0000256" key="2">
    <source>
        <dbReference type="SAM" id="MobiDB-lite"/>
    </source>
</evidence>
<evidence type="ECO:0000269" key="3">
    <source>
    </source>
</evidence>
<evidence type="ECO:0000303" key="4">
    <source>
    </source>
</evidence>
<evidence type="ECO:0000312" key="5">
    <source>
        <dbReference type="EMBL" id="ACX95754.1"/>
    </source>
</evidence>
<comment type="function">
    <text evidence="1 3">McdA and McdB together mediate carboxysome positioning on the nucleoid and to prevent their aggregation in the cell (PubMed:33638215). Undergoes liquid-liquid phase separation at pH 7.0 in the presence of crowders polyethylene glycol or Ficoll (PubMed:33638215). McdA is an ATPase that forms dynamic gradients on the nucleoid in response to adapter protein McdB, which associates with carboxysomes. The interplay between McdA gradients on the nucleoid and McdB-bound carboxysomes result in the equal spacing of Cbs along the cell length. Stimulates the ATPase activity of McdA, causing McdA to be released from DNA (By similarity).</text>
</comment>
<comment type="function">
    <text evidence="1">Incorrect positioning (aggregation) of carboxysomes results in reduced CO(2) fixation by encapsulated form 1 ribulose-1,5-bisphosphate carboxylase (RuBisCO, cbbL/cbbS), which leads to slower growth.</text>
</comment>
<comment type="subunit">
    <text evidence="1 3">Monomer, associates with McdA:DNA (PubMed:33638215). Interacts with shell components of the carboxysome (By similarity).</text>
</comment>
<comment type="subcellular location">
    <subcellularLocation>
        <location evidence="3">Carboxysome</location>
    </subcellularLocation>
</comment>
<comment type="disruption phenotype">
    <text evidence="3">Carboxysomes (Cb) are no longer evenly distributed over the nucleoid region on the whole cell length; 66% localize to one cell pole, 5% have Cb at both poles while 29% lack Cbs (PubMed:33638215). Cbs are nucleoid excluded.</text>
</comment>
<name>MCDB_HALNC</name>
<feature type="chain" id="PRO_0000459780" description="Maintenance of carboxysome distribution protein B">
    <location>
        <begin position="1"/>
        <end position="96"/>
    </location>
</feature>
<feature type="region of interest" description="Disordered" evidence="2">
    <location>
        <begin position="1"/>
        <end position="96"/>
    </location>
</feature>
<feature type="compositionally biased region" description="Basic and acidic residues" evidence="2">
    <location>
        <begin position="1"/>
        <end position="18"/>
    </location>
</feature>
<feature type="compositionally biased region" description="Low complexity" evidence="2">
    <location>
        <begin position="59"/>
        <end position="74"/>
    </location>
</feature>
<keyword id="KW-1283">Bacterial microcompartment</keyword>
<keyword id="KW-0120">Carbon dioxide fixation</keyword>
<keyword id="KW-1282">Carboxysome</keyword>
<keyword id="KW-1185">Reference proteome</keyword>
<protein>
    <recommendedName>
        <fullName evidence="4">Maintenance of carboxysome distribution protein B</fullName>
        <shortName evidence="4">alpha-McdB</shortName>
    </recommendedName>
</protein>
<gene>
    <name evidence="4" type="primary">mcdB</name>
    <name evidence="5" type="ordered locus">Hneap_0911</name>
</gene>
<organism>
    <name type="scientific">Halothiobacillus neapolitanus (strain ATCC 23641 / c2)</name>
    <name type="common">Thiobacillus neapolitanus</name>
    <dbReference type="NCBI Taxonomy" id="555778"/>
    <lineage>
        <taxon>Bacteria</taxon>
        <taxon>Pseudomonadati</taxon>
        <taxon>Pseudomonadota</taxon>
        <taxon>Gammaproteobacteria</taxon>
        <taxon>Chromatiales</taxon>
        <taxon>Halothiobacillaceae</taxon>
        <taxon>Halothiobacillus</taxon>
    </lineage>
</organism>
<accession>D0KZ81</accession>
<dbReference type="EMBL" id="CP001801">
    <property type="protein sequence ID" value="ACX95754.1"/>
    <property type="molecule type" value="Genomic_DNA"/>
</dbReference>
<dbReference type="RefSeq" id="WP_012823790.1">
    <property type="nucleotide sequence ID" value="NC_013422.1"/>
</dbReference>
<dbReference type="STRING" id="555778.Hneap_0911"/>
<dbReference type="KEGG" id="hna:Hneap_0911"/>
<dbReference type="HOGENOM" id="CLU_2355814_0_0_6"/>
<dbReference type="Proteomes" id="UP000009102">
    <property type="component" value="Chromosome"/>
</dbReference>
<dbReference type="GO" id="GO:0031470">
    <property type="term" value="C:carboxysome"/>
    <property type="evidence" value="ECO:0007669"/>
    <property type="project" value="UniProtKB-SubCell"/>
</dbReference>
<dbReference type="GO" id="GO:0015977">
    <property type="term" value="P:carbon fixation"/>
    <property type="evidence" value="ECO:0007669"/>
    <property type="project" value="UniProtKB-KW"/>
</dbReference>